<protein>
    <recommendedName>
        <fullName>Alpha-amylase 1B</fullName>
        <ecNumber evidence="4">3.2.1.1</ecNumber>
    </recommendedName>
</protein>
<organism>
    <name type="scientific">Homo sapiens</name>
    <name type="common">Human</name>
    <dbReference type="NCBI Taxonomy" id="9606"/>
    <lineage>
        <taxon>Eukaryota</taxon>
        <taxon>Metazoa</taxon>
        <taxon>Chordata</taxon>
        <taxon>Craniata</taxon>
        <taxon>Vertebrata</taxon>
        <taxon>Euteleostomi</taxon>
        <taxon>Mammalia</taxon>
        <taxon>Eutheria</taxon>
        <taxon>Euarchontoglires</taxon>
        <taxon>Primates</taxon>
        <taxon>Haplorrhini</taxon>
        <taxon>Catarrhini</taxon>
        <taxon>Hominidae</taxon>
        <taxon>Homo</taxon>
    </lineage>
</organism>
<gene>
    <name evidence="9" type="primary">AMY1B</name>
    <name type="synonym">AMY1</name>
</gene>
<feature type="signal peptide" evidence="3">
    <location>
        <begin position="1"/>
        <end position="15"/>
    </location>
</feature>
<feature type="chain" id="PRO_0000450820" description="Alpha-amylase 1B">
    <location>
        <begin position="16"/>
        <end position="511"/>
    </location>
</feature>
<feature type="active site" description="Nucleophile">
    <location>
        <position position="212"/>
    </location>
</feature>
<feature type="active site" description="Proton donor">
    <location>
        <position position="248"/>
    </location>
</feature>
<feature type="binding site" evidence="4 5">
    <location>
        <position position="115"/>
    </location>
    <ligand>
        <name>Ca(2+)</name>
        <dbReference type="ChEBI" id="CHEBI:29108"/>
    </ligand>
</feature>
<feature type="binding site" evidence="4 5">
    <location>
        <position position="173"/>
    </location>
    <ligand>
        <name>Ca(2+)</name>
        <dbReference type="ChEBI" id="CHEBI:29108"/>
    </ligand>
</feature>
<feature type="binding site" evidence="4 5">
    <location>
        <position position="182"/>
    </location>
    <ligand>
        <name>Ca(2+)</name>
        <dbReference type="ChEBI" id="CHEBI:29108"/>
    </ligand>
</feature>
<feature type="binding site" evidence="4 5">
    <location>
        <position position="210"/>
    </location>
    <ligand>
        <name>chloride</name>
        <dbReference type="ChEBI" id="CHEBI:17996"/>
    </ligand>
</feature>
<feature type="binding site" evidence="4 5">
    <location>
        <position position="216"/>
    </location>
    <ligand>
        <name>Ca(2+)</name>
        <dbReference type="ChEBI" id="CHEBI:29108"/>
    </ligand>
</feature>
<feature type="binding site" evidence="4 5">
    <location>
        <position position="313"/>
    </location>
    <ligand>
        <name>chloride</name>
        <dbReference type="ChEBI" id="CHEBI:17996"/>
    </ligand>
</feature>
<feature type="binding site" evidence="4 5">
    <location>
        <position position="352"/>
    </location>
    <ligand>
        <name>chloride</name>
        <dbReference type="ChEBI" id="CHEBI:17996"/>
    </ligand>
</feature>
<feature type="site" description="Transition state stabilizer" evidence="2">
    <location>
        <position position="315"/>
    </location>
</feature>
<feature type="modified residue" description="Pyrrolidone carboxylic acid" evidence="1">
    <location>
        <position position="16"/>
    </location>
</feature>
<feature type="modified residue" description="Deamidated asparagine; partial" evidence="7">
    <location>
        <position position="365"/>
    </location>
</feature>
<feature type="modified residue" description="Deamidated asparagine; partial; alternate" evidence="7">
    <location>
        <position position="427"/>
    </location>
</feature>
<feature type="modified residue" description="Deamidated asparagine; partial" evidence="7">
    <location>
        <position position="474"/>
    </location>
</feature>
<feature type="glycosylation site" description="N-linked (GlcNAc...) asparagine" evidence="6 7">
    <location>
        <position position="427"/>
    </location>
</feature>
<feature type="glycosylation site" description="N-linked (GlcNAc...) asparagine" evidence="3">
    <location>
        <position position="476"/>
    </location>
</feature>
<feature type="disulfide bond" evidence="4 5">
    <location>
        <begin position="43"/>
        <end position="101"/>
    </location>
</feature>
<feature type="disulfide bond" evidence="4 5">
    <location>
        <begin position="85"/>
        <end position="130"/>
    </location>
</feature>
<feature type="disulfide bond" evidence="4 5">
    <location>
        <begin position="156"/>
        <end position="175"/>
    </location>
</feature>
<feature type="disulfide bond" evidence="4 5">
    <location>
        <begin position="393"/>
        <end position="399"/>
    </location>
</feature>
<feature type="disulfide bond" evidence="4 5">
    <location>
        <begin position="465"/>
        <end position="477"/>
    </location>
</feature>
<name>AMY1B_HUMAN</name>
<comment type="function">
    <text evidence="4">Calcium-binding enzyme that initiates starch digestion in the oral cavity (PubMed:12527308). Catalyzes the hydrolysis of internal (1-&gt;4)-alpha-D-glucosidic bonds, yielding a mixture of maltose, isomaltose, small amounts of glucose as well as small linear and branched oligosaccharides called dextrins (PubMed:12527308).</text>
</comment>
<comment type="catalytic activity">
    <reaction evidence="4">
        <text>Endohydrolysis of (1-&gt;4)-alpha-D-glucosidic linkages in polysaccharides containing three or more (1-&gt;4)-alpha-linked D-glucose units.</text>
        <dbReference type="EC" id="3.2.1.1"/>
    </reaction>
</comment>
<comment type="cofactor">
    <cofactor evidence="4 5">
        <name>Ca(2+)</name>
        <dbReference type="ChEBI" id="CHEBI:29108"/>
    </cofactor>
    <text evidence="4 5">Binds 1 Ca(2+) ion per subunit.</text>
</comment>
<comment type="cofactor">
    <cofactor evidence="4 5">
        <name>chloride</name>
        <dbReference type="ChEBI" id="CHEBI:17996"/>
    </cofactor>
    <text evidence="4 5">Binds 1 Cl(-) ion per subunit.</text>
</comment>
<comment type="subunit">
    <text>Monomer.</text>
</comment>
<comment type="subcellular location">
    <subcellularLocation>
        <location evidence="8">Secreted</location>
    </subcellularLocation>
</comment>
<comment type="similarity">
    <text evidence="8">Belongs to the glycosyl hydrolase 13 family.</text>
</comment>
<comment type="caution">
    <text evidence="8">Three distinct genes (AMY1A, AMY1B and AMY1C), located in a gene cluster on 1p21, encode proteins sharing the same peptidic sequence.</text>
</comment>
<comment type="online information" name="Wikipedia">
    <link uri="https://en.wikipedia.org/wiki/Amylase"/>
    <text>Amylase entry</text>
</comment>
<evidence type="ECO:0000250" key="1">
    <source>
        <dbReference type="UniProtKB" id="P00687"/>
    </source>
</evidence>
<evidence type="ECO:0000250" key="2">
    <source>
        <dbReference type="UniProtKB" id="P04746"/>
    </source>
</evidence>
<evidence type="ECO:0000255" key="3"/>
<evidence type="ECO:0000269" key="4">
    <source>
    </source>
</evidence>
<evidence type="ECO:0000269" key="5">
    <source>
    </source>
</evidence>
<evidence type="ECO:0000269" key="6">
    <source>
    </source>
</evidence>
<evidence type="ECO:0000269" key="7">
    <source>
    </source>
</evidence>
<evidence type="ECO:0000305" key="8"/>
<evidence type="ECO:0000312" key="9">
    <source>
        <dbReference type="HGNC" id="HGNC:475"/>
    </source>
</evidence>
<dbReference type="EC" id="3.2.1.1" evidence="4"/>
<dbReference type="EMBL" id="AL513482">
    <property type="status" value="NOT_ANNOTATED_CDS"/>
    <property type="molecule type" value="Genomic_DNA"/>
</dbReference>
<dbReference type="CCDS" id="CCDS30783.1"/>
<dbReference type="RefSeq" id="NP_001008219.1">
    <property type="nucleotide sequence ID" value="NM_001008218.2"/>
</dbReference>
<dbReference type="RefSeq" id="NP_001008220.1">
    <property type="nucleotide sequence ID" value="NM_001008219.2"/>
</dbReference>
<dbReference type="RefSeq" id="NP_001008222.1">
    <property type="nucleotide sequence ID" value="NM_001008221.1"/>
</dbReference>
<dbReference type="RefSeq" id="NP_001333709.1">
    <property type="nucleotide sequence ID" value="NM_001346780.1"/>
</dbReference>
<dbReference type="RefSeq" id="NP_001373854.1">
    <property type="nucleotide sequence ID" value="NM_001386925.1"/>
</dbReference>
<dbReference type="RefSeq" id="NP_004029.2">
    <property type="nucleotide sequence ID" value="NM_004038.3"/>
</dbReference>
<dbReference type="RefSeq" id="XP_011539564.1">
    <property type="nucleotide sequence ID" value="XM_011541262.1"/>
</dbReference>
<dbReference type="RefSeq" id="XP_016856547.1">
    <property type="nucleotide sequence ID" value="XM_017001058.1"/>
</dbReference>
<dbReference type="SMR" id="P0DTE7"/>
<dbReference type="FunCoup" id="P0DTE7">
    <property type="interactions" value="456"/>
</dbReference>
<dbReference type="GlyCosmos" id="P0DTE7">
    <property type="glycosylation" value="2 sites, No reported glycans"/>
</dbReference>
<dbReference type="GlyGen" id="P0DTE7">
    <property type="glycosylation" value="2 sites"/>
</dbReference>
<dbReference type="iPTMnet" id="P0DTE7"/>
<dbReference type="jPOST" id="P0DTE7"/>
<dbReference type="MassIVE" id="P0DTE7"/>
<dbReference type="PeptideAtlas" id="P0DTE7"/>
<dbReference type="DNASU" id="276"/>
<dbReference type="Ensembl" id="ENST00000330330.10">
    <property type="protein sequence ID" value="ENSP00000330484.5"/>
    <property type="gene ID" value="ENSG00000174876.17"/>
</dbReference>
<dbReference type="Ensembl" id="ENST00000370080.7">
    <property type="protein sequence ID" value="ENSP00000359097.3"/>
    <property type="gene ID" value="ENSG00000174876.17"/>
</dbReference>
<dbReference type="GeneID" id="276"/>
<dbReference type="GeneID" id="277"/>
<dbReference type="GeneID" id="278"/>
<dbReference type="KEGG" id="hsa:276"/>
<dbReference type="KEGG" id="hsa:277"/>
<dbReference type="KEGG" id="hsa:278"/>
<dbReference type="MANE-Select" id="ENST00000330330.10">
    <property type="protein sequence ID" value="ENSP00000330484.5"/>
    <property type="RefSeq nucleotide sequence ID" value="NM_001008218.2"/>
    <property type="RefSeq protein sequence ID" value="NP_001008219.1"/>
</dbReference>
<dbReference type="AGR" id="HGNC:474"/>
<dbReference type="AGR" id="HGNC:475"/>
<dbReference type="AGR" id="HGNC:476"/>
<dbReference type="CTD" id="276"/>
<dbReference type="CTD" id="277"/>
<dbReference type="CTD" id="278"/>
<dbReference type="DisGeNET" id="276"/>
<dbReference type="DisGeNET" id="277"/>
<dbReference type="DisGeNET" id="278"/>
<dbReference type="GeneCards" id="AMY1B"/>
<dbReference type="HGNC" id="HGNC:475">
    <property type="gene designation" value="AMY1B"/>
</dbReference>
<dbReference type="HPA" id="ENSG00000174876">
    <property type="expression patterns" value="Tissue enriched (salivary)"/>
</dbReference>
<dbReference type="MIM" id="104701">
    <property type="type" value="gene"/>
</dbReference>
<dbReference type="neXtProt" id="NX_P0DTE7"/>
<dbReference type="OpenTargets" id="ENSG00000187733"/>
<dbReference type="InParanoid" id="P0DTE7"/>
<dbReference type="OMA" id="GTHGVQS"/>
<dbReference type="OrthoDB" id="550577at2759"/>
<dbReference type="Reactome" id="R-HSA-189085">
    <property type="pathway name" value="Digestion of dietary carbohydrate"/>
</dbReference>
<dbReference type="PRO" id="PR:P0DTE7"/>
<dbReference type="Proteomes" id="UP000005640">
    <property type="component" value="Chromosome 1"/>
</dbReference>
<dbReference type="Bgee" id="ENSG00000174876">
    <property type="expression patterns" value="Expressed in right uterine tube and 63 other cell types or tissues"/>
</dbReference>
<dbReference type="ExpressionAtlas" id="P0DTE7">
    <property type="expression patterns" value="baseline and differential"/>
</dbReference>
<dbReference type="GO" id="GO:0070062">
    <property type="term" value="C:extracellular exosome"/>
    <property type="evidence" value="ECO:0007005"/>
    <property type="project" value="UniProtKB"/>
</dbReference>
<dbReference type="GO" id="GO:0005615">
    <property type="term" value="C:extracellular space"/>
    <property type="evidence" value="ECO:0000314"/>
    <property type="project" value="UniProtKB"/>
</dbReference>
<dbReference type="GO" id="GO:0004556">
    <property type="term" value="F:alpha-amylase activity"/>
    <property type="evidence" value="ECO:0000314"/>
    <property type="project" value="UniProtKB"/>
</dbReference>
<dbReference type="GO" id="GO:0005509">
    <property type="term" value="F:calcium ion binding"/>
    <property type="evidence" value="ECO:0000314"/>
    <property type="project" value="UniProtKB"/>
</dbReference>
<dbReference type="GO" id="GO:0031404">
    <property type="term" value="F:chloride ion binding"/>
    <property type="evidence" value="ECO:0000314"/>
    <property type="project" value="UniProtKB"/>
</dbReference>
<dbReference type="GO" id="GO:0005975">
    <property type="term" value="P:carbohydrate metabolic process"/>
    <property type="evidence" value="ECO:0000318"/>
    <property type="project" value="GO_Central"/>
</dbReference>
<dbReference type="GO" id="GO:0009311">
    <property type="term" value="P:oligosaccharide metabolic process"/>
    <property type="evidence" value="ECO:0000314"/>
    <property type="project" value="UniProtKB"/>
</dbReference>
<dbReference type="CDD" id="cd11317">
    <property type="entry name" value="AmyAc_bac_euk_AmyA"/>
    <property type="match status" value="1"/>
</dbReference>
<dbReference type="FunFam" id="2.60.40.1180:FF:000020">
    <property type="entry name" value="Pancreatic alpha-amylase"/>
    <property type="match status" value="1"/>
</dbReference>
<dbReference type="FunFam" id="3.20.20.80:FF:000056">
    <property type="entry name" value="Pancreatic alpha-amylase"/>
    <property type="match status" value="1"/>
</dbReference>
<dbReference type="Gene3D" id="3.20.20.80">
    <property type="entry name" value="Glycosidases"/>
    <property type="match status" value="1"/>
</dbReference>
<dbReference type="Gene3D" id="2.60.40.1180">
    <property type="entry name" value="Golgi alpha-mannosidase II"/>
    <property type="match status" value="1"/>
</dbReference>
<dbReference type="InterPro" id="IPR006048">
    <property type="entry name" value="A-amylase/branching_C"/>
</dbReference>
<dbReference type="InterPro" id="IPR031319">
    <property type="entry name" value="A-amylase_C"/>
</dbReference>
<dbReference type="InterPro" id="IPR006046">
    <property type="entry name" value="Alpha_amylase"/>
</dbReference>
<dbReference type="InterPro" id="IPR006047">
    <property type="entry name" value="Glyco_hydro_13_cat_dom"/>
</dbReference>
<dbReference type="InterPro" id="IPR013780">
    <property type="entry name" value="Glyco_hydro_b"/>
</dbReference>
<dbReference type="InterPro" id="IPR017853">
    <property type="entry name" value="Glycoside_hydrolase_SF"/>
</dbReference>
<dbReference type="PANTHER" id="PTHR43447">
    <property type="entry name" value="ALPHA-AMYLASE"/>
    <property type="match status" value="1"/>
</dbReference>
<dbReference type="Pfam" id="PF00128">
    <property type="entry name" value="Alpha-amylase"/>
    <property type="match status" value="1"/>
</dbReference>
<dbReference type="Pfam" id="PF02806">
    <property type="entry name" value="Alpha-amylase_C"/>
    <property type="match status" value="1"/>
</dbReference>
<dbReference type="PRINTS" id="PR00110">
    <property type="entry name" value="ALPHAAMYLASE"/>
</dbReference>
<dbReference type="SMART" id="SM00642">
    <property type="entry name" value="Aamy"/>
    <property type="match status" value="1"/>
</dbReference>
<dbReference type="SMART" id="SM00632">
    <property type="entry name" value="Aamy_C"/>
    <property type="match status" value="1"/>
</dbReference>
<dbReference type="SUPFAM" id="SSF51445">
    <property type="entry name" value="(Trans)glycosidases"/>
    <property type="match status" value="1"/>
</dbReference>
<dbReference type="SUPFAM" id="SSF51011">
    <property type="entry name" value="Glycosyl hydrolase domain"/>
    <property type="match status" value="1"/>
</dbReference>
<reference key="1">
    <citation type="journal article" date="2006" name="Nature">
        <title>The DNA sequence and biological annotation of human chromosome 1.</title>
        <authorList>
            <person name="Gregory S.G."/>
            <person name="Barlow K.F."/>
            <person name="McLay K.E."/>
            <person name="Kaul R."/>
            <person name="Swarbreck D."/>
            <person name="Dunham A."/>
            <person name="Scott C.E."/>
            <person name="Howe K.L."/>
            <person name="Woodfine K."/>
            <person name="Spencer C.C.A."/>
            <person name="Jones M.C."/>
            <person name="Gillson C."/>
            <person name="Searle S."/>
            <person name="Zhou Y."/>
            <person name="Kokocinski F."/>
            <person name="McDonald L."/>
            <person name="Evans R."/>
            <person name="Phillips K."/>
            <person name="Atkinson A."/>
            <person name="Cooper R."/>
            <person name="Jones C."/>
            <person name="Hall R.E."/>
            <person name="Andrews T.D."/>
            <person name="Lloyd C."/>
            <person name="Ainscough R."/>
            <person name="Almeida J.P."/>
            <person name="Ambrose K.D."/>
            <person name="Anderson F."/>
            <person name="Andrew R.W."/>
            <person name="Ashwell R.I.S."/>
            <person name="Aubin K."/>
            <person name="Babbage A.K."/>
            <person name="Bagguley C.L."/>
            <person name="Bailey J."/>
            <person name="Beasley H."/>
            <person name="Bethel G."/>
            <person name="Bird C.P."/>
            <person name="Bray-Allen S."/>
            <person name="Brown J.Y."/>
            <person name="Brown A.J."/>
            <person name="Buckley D."/>
            <person name="Burton J."/>
            <person name="Bye J."/>
            <person name="Carder C."/>
            <person name="Chapman J.C."/>
            <person name="Clark S.Y."/>
            <person name="Clarke G."/>
            <person name="Clee C."/>
            <person name="Cobley V."/>
            <person name="Collier R.E."/>
            <person name="Corby N."/>
            <person name="Coville G.J."/>
            <person name="Davies J."/>
            <person name="Deadman R."/>
            <person name="Dunn M."/>
            <person name="Earthrowl M."/>
            <person name="Ellington A.G."/>
            <person name="Errington H."/>
            <person name="Frankish A."/>
            <person name="Frankland J."/>
            <person name="French L."/>
            <person name="Garner P."/>
            <person name="Garnett J."/>
            <person name="Gay L."/>
            <person name="Ghori M.R.J."/>
            <person name="Gibson R."/>
            <person name="Gilby L.M."/>
            <person name="Gillett W."/>
            <person name="Glithero R.J."/>
            <person name="Grafham D.V."/>
            <person name="Griffiths C."/>
            <person name="Griffiths-Jones S."/>
            <person name="Grocock R."/>
            <person name="Hammond S."/>
            <person name="Harrison E.S.I."/>
            <person name="Hart E."/>
            <person name="Haugen E."/>
            <person name="Heath P.D."/>
            <person name="Holmes S."/>
            <person name="Holt K."/>
            <person name="Howden P.J."/>
            <person name="Hunt A.R."/>
            <person name="Hunt S.E."/>
            <person name="Hunter G."/>
            <person name="Isherwood J."/>
            <person name="James R."/>
            <person name="Johnson C."/>
            <person name="Johnson D."/>
            <person name="Joy A."/>
            <person name="Kay M."/>
            <person name="Kershaw J.K."/>
            <person name="Kibukawa M."/>
            <person name="Kimberley A.M."/>
            <person name="King A."/>
            <person name="Knights A.J."/>
            <person name="Lad H."/>
            <person name="Laird G."/>
            <person name="Lawlor S."/>
            <person name="Leongamornlert D.A."/>
            <person name="Lloyd D.M."/>
            <person name="Loveland J."/>
            <person name="Lovell J."/>
            <person name="Lush M.J."/>
            <person name="Lyne R."/>
            <person name="Martin S."/>
            <person name="Mashreghi-Mohammadi M."/>
            <person name="Matthews L."/>
            <person name="Matthews N.S.W."/>
            <person name="McLaren S."/>
            <person name="Milne S."/>
            <person name="Mistry S."/>
            <person name="Moore M.J.F."/>
            <person name="Nickerson T."/>
            <person name="O'Dell C.N."/>
            <person name="Oliver K."/>
            <person name="Palmeiri A."/>
            <person name="Palmer S.A."/>
            <person name="Parker A."/>
            <person name="Patel D."/>
            <person name="Pearce A.V."/>
            <person name="Peck A.I."/>
            <person name="Pelan S."/>
            <person name="Phelps K."/>
            <person name="Phillimore B.J."/>
            <person name="Plumb R."/>
            <person name="Rajan J."/>
            <person name="Raymond C."/>
            <person name="Rouse G."/>
            <person name="Saenphimmachak C."/>
            <person name="Sehra H.K."/>
            <person name="Sheridan E."/>
            <person name="Shownkeen R."/>
            <person name="Sims S."/>
            <person name="Skuce C.D."/>
            <person name="Smith M."/>
            <person name="Steward C."/>
            <person name="Subramanian S."/>
            <person name="Sycamore N."/>
            <person name="Tracey A."/>
            <person name="Tromans A."/>
            <person name="Van Helmond Z."/>
            <person name="Wall M."/>
            <person name="Wallis J.M."/>
            <person name="White S."/>
            <person name="Whitehead S.L."/>
            <person name="Wilkinson J.E."/>
            <person name="Willey D.L."/>
            <person name="Williams H."/>
            <person name="Wilming L."/>
            <person name="Wray P.W."/>
            <person name="Wu Z."/>
            <person name="Coulson A."/>
            <person name="Vaudin M."/>
            <person name="Sulston J.E."/>
            <person name="Durbin R.M."/>
            <person name="Hubbard T."/>
            <person name="Wooster R."/>
            <person name="Dunham I."/>
            <person name="Carter N.P."/>
            <person name="McVean G."/>
            <person name="Ross M.T."/>
            <person name="Harrow J."/>
            <person name="Olson M.V."/>
            <person name="Beck S."/>
            <person name="Rogers J."/>
            <person name="Bentley D.R."/>
        </authorList>
    </citation>
    <scope>NUCLEOTIDE SEQUENCE [LARGE SCALE GENOMIC DNA]</scope>
</reference>
<reference key="2">
    <citation type="journal article" date="1991" name="Electrophoresis">
        <title>Electrophoretic characterization of posttranslational modifications of human parotid salivary alpha-amylase.</title>
        <authorList>
            <person name="Bank R.A."/>
            <person name="Hettema E.H."/>
            <person name="Arwert F."/>
            <person name="Amerongen A.V."/>
            <person name="Pronk J.C."/>
        </authorList>
    </citation>
    <scope>GLYCOSYLATION AT ASN-427</scope>
    <scope>DEAMIDATION AT ASN-365; ASN-427 AND ASN-474</scope>
</reference>
<reference key="3">
    <citation type="journal article" date="2006" name="J. Proteome Res.">
        <title>Identification of N-linked glycoproteins in human saliva by glycoprotein capture and mass spectrometry.</title>
        <authorList>
            <person name="Ramachandran P."/>
            <person name="Boontheung P."/>
            <person name="Xie Y."/>
            <person name="Sondej M."/>
            <person name="Wong D.T."/>
            <person name="Loo J.A."/>
        </authorList>
    </citation>
    <scope>GLYCOSYLATION [LARGE SCALE ANALYSIS] AT ASN-427</scope>
    <source>
        <tissue>Saliva</tissue>
    </source>
</reference>
<reference key="4">
    <citation type="journal article" date="1996" name="Acta Crystallogr. D">
        <title>Structure of human salivary alpha-amylase at 1.6-A resolution: implications for its role in the oral cavity.</title>
        <authorList>
            <person name="Ramasubbu N."/>
            <person name="Paloth V."/>
            <person name="Luo Y."/>
            <person name="Brayer G.D."/>
            <person name="Levine M.J."/>
        </authorList>
    </citation>
    <scope>X-RAY CRYSTALLOGRAPHY (1.60 ANGSTROMS) OF 17-511 IN COMPLEX WITH CALCIUM AND CHLORIDE</scope>
    <scope>DISULFIDE BONDS</scope>
    <scope>COFACTOR</scope>
</reference>
<reference key="5">
    <citation type="journal article" date="2003" name="J. Mol. Biol.">
        <title>Probing the role of a mobile loop in substrate binding and enzyme activity of human salivary amylase.</title>
        <authorList>
            <person name="Ramasubbu N."/>
            <person name="Ragunath C."/>
            <person name="Mishra P.J."/>
        </authorList>
    </citation>
    <scope>X-RAY CRYSTALLOGRAPHY (1.90 ANGSTROMS) OF 16-511 OF WILD-TYPE AND MUTANT 321-GLY--ALA-325 DEL IN COMPLEX WITH CALCIUM AND CHLORIDE</scope>
    <scope>CATALYTIC ACTIVITY</scope>
    <scope>DISULFIDE BONDS</scope>
</reference>
<accession>P0DTE7</accession>
<accession>A6NJS5</accession>
<accession>A8K8H6</accession>
<accession>P04745</accession>
<accession>Q13763</accession>
<accession>Q5T083</accession>
<keyword id="KW-0106">Calcium</keyword>
<keyword id="KW-0119">Carbohydrate metabolism</keyword>
<keyword id="KW-0868">Chloride</keyword>
<keyword id="KW-1015">Disulfide bond</keyword>
<keyword id="KW-0325">Glycoprotein</keyword>
<keyword id="KW-0326">Glycosidase</keyword>
<keyword id="KW-0378">Hydrolase</keyword>
<keyword id="KW-0479">Metal-binding</keyword>
<keyword id="KW-0873">Pyrrolidone carboxylic acid</keyword>
<keyword id="KW-1185">Reference proteome</keyword>
<keyword id="KW-0964">Secreted</keyword>
<keyword id="KW-0732">Signal</keyword>
<sequence>MKLFWLLFTIGFCWAQYSSNTQQGRTSIVHLFEWRWVDIALECERYLAPKGFGGVQVSPPNENVAIHNPFRPWWERYQPVSYKLCTRSGNEDEFRNMVTRCNNVGVRIYVDAVINHMCGNAVSAGTSSTCGSYFNPGSRDFPAVPYSGWDFNDGKCKTGSGDIENYNDATQVRDCRLSGLLDLALGKDYVRSKIAEYMNHLIDIGVAGFRIDASKHMWPGDIKAILDKLHNLNSNWFPEGSKPFIYQEVIDLGGEPIKSSDYFGNGRVTEFKYGAKLGTVIRKWNGEKMSYLKNWGEGWGFMPSDRALVFVDNHDNQRGHGAGGASILTFWDARLYKMAVGFMLAHPYGFTRVMSSYRWPRYFENGKDVNDWVGPPNDNGVTKEVTINPDTTCGNDWVCEHRWRQIRNMVNFRNVVDGQPFTNWYDNGSNQVAFGRGNRGFIVFNNDDWTFSLTLQTGLPAGTYCDVISGDKINGNCTGIKIYVSDDGKAHFSISNSAEDPFIAIHAESKL</sequence>
<proteinExistence type="evidence at protein level"/>